<feature type="propeptide" id="PRO_0000029257" evidence="1">
    <location>
        <begin position="1"/>
        <end position="34"/>
    </location>
</feature>
<feature type="chain" id="PRO_0000029258" description="Amidophosphoribosyltransferase">
    <location>
        <begin position="35"/>
        <end position="527"/>
    </location>
</feature>
<feature type="domain" description="Glutamine amidotransferase type-2" evidence="2">
    <location>
        <begin position="35"/>
        <end position="261"/>
    </location>
</feature>
<feature type="region of interest" description="Disordered" evidence="3">
    <location>
        <begin position="1"/>
        <end position="30"/>
    </location>
</feature>
<feature type="compositionally biased region" description="Polar residues" evidence="3">
    <location>
        <begin position="15"/>
        <end position="29"/>
    </location>
</feature>
<feature type="active site" description="Nucleophile" evidence="2">
    <location>
        <position position="35"/>
    </location>
</feature>
<feature type="binding site" evidence="2">
    <location>
        <position position="276"/>
    </location>
    <ligand>
        <name>[4Fe-4S] cluster</name>
        <dbReference type="ChEBI" id="CHEBI:49883"/>
    </ligand>
</feature>
<feature type="binding site" evidence="2">
    <location>
        <position position="323"/>
    </location>
    <ligand>
        <name>Mg(2+)</name>
        <dbReference type="ChEBI" id="CHEBI:18420"/>
    </ligand>
</feature>
<feature type="binding site" evidence="2">
    <location>
        <position position="385"/>
    </location>
    <ligand>
        <name>Mg(2+)</name>
        <dbReference type="ChEBI" id="CHEBI:18420"/>
    </ligand>
</feature>
<feature type="binding site" evidence="2">
    <location>
        <position position="386"/>
    </location>
    <ligand>
        <name>Mg(2+)</name>
        <dbReference type="ChEBI" id="CHEBI:18420"/>
    </ligand>
</feature>
<feature type="binding site" evidence="2">
    <location>
        <position position="422"/>
    </location>
    <ligand>
        <name>[4Fe-4S] cluster</name>
        <dbReference type="ChEBI" id="CHEBI:49883"/>
    </ligand>
</feature>
<feature type="binding site" evidence="2">
    <location>
        <position position="478"/>
    </location>
    <ligand>
        <name>[4Fe-4S] cluster</name>
        <dbReference type="ChEBI" id="CHEBI:49883"/>
    </ligand>
</feature>
<feature type="binding site" evidence="2">
    <location>
        <position position="481"/>
    </location>
    <ligand>
        <name>[4Fe-4S] cluster</name>
        <dbReference type="ChEBI" id="CHEBI:49883"/>
    </ligand>
</feature>
<dbReference type="EC" id="2.4.2.14" evidence="2"/>
<dbReference type="EMBL" id="AL123456">
    <property type="protein sequence ID" value="CCP43556.1"/>
    <property type="molecule type" value="Genomic_DNA"/>
</dbReference>
<dbReference type="PIR" id="A70537">
    <property type="entry name" value="A70537"/>
</dbReference>
<dbReference type="RefSeq" id="NP_215323.1">
    <property type="nucleotide sequence ID" value="NC_000962.3"/>
</dbReference>
<dbReference type="RefSeq" id="WP_003404129.1">
    <property type="nucleotide sequence ID" value="NC_000962.3"/>
</dbReference>
<dbReference type="SMR" id="P9WHQ7"/>
<dbReference type="FunCoup" id="P9WHQ7">
    <property type="interactions" value="304"/>
</dbReference>
<dbReference type="STRING" id="83332.Rv0808"/>
<dbReference type="MEROPS" id="C44.001"/>
<dbReference type="PaxDb" id="83332-Rv0808"/>
<dbReference type="DNASU" id="885085"/>
<dbReference type="GeneID" id="885085"/>
<dbReference type="KEGG" id="mtu:Rv0808"/>
<dbReference type="KEGG" id="mtv:RVBD_0808"/>
<dbReference type="PATRIC" id="fig|83332.111.peg.895"/>
<dbReference type="TubercuList" id="Rv0808"/>
<dbReference type="eggNOG" id="COG0034">
    <property type="taxonomic scope" value="Bacteria"/>
</dbReference>
<dbReference type="InParanoid" id="P9WHQ7"/>
<dbReference type="OrthoDB" id="9801213at2"/>
<dbReference type="PhylomeDB" id="P9WHQ7"/>
<dbReference type="UniPathway" id="UPA00074">
    <property type="reaction ID" value="UER00124"/>
</dbReference>
<dbReference type="Proteomes" id="UP000001584">
    <property type="component" value="Chromosome"/>
</dbReference>
<dbReference type="GO" id="GO:0051539">
    <property type="term" value="F:4 iron, 4 sulfur cluster binding"/>
    <property type="evidence" value="ECO:0007669"/>
    <property type="project" value="UniProtKB-KW"/>
</dbReference>
<dbReference type="GO" id="GO:0004044">
    <property type="term" value="F:amidophosphoribosyltransferase activity"/>
    <property type="evidence" value="ECO:0000318"/>
    <property type="project" value="GO_Central"/>
</dbReference>
<dbReference type="GO" id="GO:0000287">
    <property type="term" value="F:magnesium ion binding"/>
    <property type="evidence" value="ECO:0007669"/>
    <property type="project" value="UniProtKB-UniRule"/>
</dbReference>
<dbReference type="GO" id="GO:0006189">
    <property type="term" value="P:'de novo' IMP biosynthetic process"/>
    <property type="evidence" value="ECO:0007669"/>
    <property type="project" value="UniProtKB-UniRule"/>
</dbReference>
<dbReference type="GO" id="GO:0009113">
    <property type="term" value="P:purine nucleobase biosynthetic process"/>
    <property type="evidence" value="ECO:0007669"/>
    <property type="project" value="InterPro"/>
</dbReference>
<dbReference type="GO" id="GO:0006164">
    <property type="term" value="P:purine nucleotide biosynthetic process"/>
    <property type="evidence" value="ECO:0000318"/>
    <property type="project" value="GO_Central"/>
</dbReference>
<dbReference type="CDD" id="cd00715">
    <property type="entry name" value="GPATase_N"/>
    <property type="match status" value="1"/>
</dbReference>
<dbReference type="CDD" id="cd06223">
    <property type="entry name" value="PRTases_typeI"/>
    <property type="match status" value="1"/>
</dbReference>
<dbReference type="Gene3D" id="3.40.50.2020">
    <property type="match status" value="1"/>
</dbReference>
<dbReference type="Gene3D" id="3.60.20.10">
    <property type="entry name" value="Glutamine Phosphoribosylpyrophosphate, subunit 1, domain 1"/>
    <property type="match status" value="1"/>
</dbReference>
<dbReference type="HAMAP" id="MF_01931">
    <property type="entry name" value="PurF"/>
    <property type="match status" value="1"/>
</dbReference>
<dbReference type="InterPro" id="IPR017932">
    <property type="entry name" value="GATase_2_dom"/>
</dbReference>
<dbReference type="InterPro" id="IPR029055">
    <property type="entry name" value="Ntn_hydrolases_N"/>
</dbReference>
<dbReference type="InterPro" id="IPR000836">
    <property type="entry name" value="PRibTrfase_dom"/>
</dbReference>
<dbReference type="InterPro" id="IPR029057">
    <property type="entry name" value="PRTase-like"/>
</dbReference>
<dbReference type="InterPro" id="IPR005854">
    <property type="entry name" value="PurF"/>
</dbReference>
<dbReference type="InterPro" id="IPR035584">
    <property type="entry name" value="PurF_N"/>
</dbReference>
<dbReference type="NCBIfam" id="TIGR01134">
    <property type="entry name" value="purF"/>
    <property type="match status" value="1"/>
</dbReference>
<dbReference type="PANTHER" id="PTHR11907">
    <property type="entry name" value="AMIDOPHOSPHORIBOSYLTRANSFERASE"/>
    <property type="match status" value="1"/>
</dbReference>
<dbReference type="Pfam" id="PF13522">
    <property type="entry name" value="GATase_6"/>
    <property type="match status" value="1"/>
</dbReference>
<dbReference type="Pfam" id="PF00156">
    <property type="entry name" value="Pribosyltran"/>
    <property type="match status" value="1"/>
</dbReference>
<dbReference type="PIRSF" id="PIRSF000485">
    <property type="entry name" value="Amd_phspho_trans"/>
    <property type="match status" value="1"/>
</dbReference>
<dbReference type="SUPFAM" id="SSF56235">
    <property type="entry name" value="N-terminal nucleophile aminohydrolases (Ntn hydrolases)"/>
    <property type="match status" value="1"/>
</dbReference>
<dbReference type="SUPFAM" id="SSF53271">
    <property type="entry name" value="PRTase-like"/>
    <property type="match status" value="1"/>
</dbReference>
<dbReference type="PROSITE" id="PS51278">
    <property type="entry name" value="GATASE_TYPE_2"/>
    <property type="match status" value="1"/>
</dbReference>
<dbReference type="PROSITE" id="PS00103">
    <property type="entry name" value="PUR_PYR_PR_TRANSFER"/>
    <property type="match status" value="1"/>
</dbReference>
<protein>
    <recommendedName>
        <fullName evidence="2">Amidophosphoribosyltransferase</fullName>
        <shortName evidence="2">ATase</shortName>
        <ecNumber evidence="2">2.4.2.14</ecNumber>
    </recommendedName>
    <alternativeName>
        <fullName evidence="2">Glutamine phosphoribosylpyrophosphate amidotransferase</fullName>
        <shortName evidence="2">GPATase</shortName>
    </alternativeName>
</protein>
<organism>
    <name type="scientific">Mycobacterium tuberculosis (strain ATCC 25618 / H37Rv)</name>
    <dbReference type="NCBI Taxonomy" id="83332"/>
    <lineage>
        <taxon>Bacteria</taxon>
        <taxon>Bacillati</taxon>
        <taxon>Actinomycetota</taxon>
        <taxon>Actinomycetes</taxon>
        <taxon>Mycobacteriales</taxon>
        <taxon>Mycobacteriaceae</taxon>
        <taxon>Mycobacterium</taxon>
        <taxon>Mycobacterium tuberculosis complex</taxon>
    </lineage>
</organism>
<name>PUR1_MYCTU</name>
<sequence length="527" mass="56162">MAVDSDYVTDRAAGSRQTVTGQQPEQDLNSPREECGVFGVWAPGEDVAKLTYYGLYALQHRGQEAAGIAVADGSQVLVFKDLGLVSQVFDEQTLAAMQGHVAIGHCRYSTTGDTTWENAQPVFRNTAAGTGVALGHNGNLVNAAALAARARDAGLIATRCPAPATTDSDILGALLAHGAADSTLEQAALDLLPTVRGAFCLTFMDENTLYACRDPYGVRPLSLGRLDRGWVVASETAALDIVGASFVRDIEPGELLAIDADGVRSTRFANPTPKGCVFEYVYLARPDSTIAGRSVHAARVEIGRRLARECPVEADLVIGVPESGTPAAVGYAQESGVPYGQGLMKNAYVGRTFIQPSQTIRQLGIRLKLNPLKEVIRGKRLIVVDDSIVRGNTQRALVRMLREAGAVELHVRIASPPVKWPCFYGIDFPSPAELIANAVENEDEMLEAVRHAIGADTLGYISLRGMVAASEQPTSRLCTACFDGKYPIELPRETALGKNVIEHMLANAARGAALGELAADDEVPVGR</sequence>
<accession>P9WHQ7</accession>
<accession>L0T4Y9</accession>
<accession>O06626</accession>
<accession>P65829</accession>
<reference key="1">
    <citation type="journal article" date="1998" name="Nature">
        <title>Deciphering the biology of Mycobacterium tuberculosis from the complete genome sequence.</title>
        <authorList>
            <person name="Cole S.T."/>
            <person name="Brosch R."/>
            <person name="Parkhill J."/>
            <person name="Garnier T."/>
            <person name="Churcher C.M."/>
            <person name="Harris D.E."/>
            <person name="Gordon S.V."/>
            <person name="Eiglmeier K."/>
            <person name="Gas S."/>
            <person name="Barry C.E. III"/>
            <person name="Tekaia F."/>
            <person name="Badcock K."/>
            <person name="Basham D."/>
            <person name="Brown D."/>
            <person name="Chillingworth T."/>
            <person name="Connor R."/>
            <person name="Davies R.M."/>
            <person name="Devlin K."/>
            <person name="Feltwell T."/>
            <person name="Gentles S."/>
            <person name="Hamlin N."/>
            <person name="Holroyd S."/>
            <person name="Hornsby T."/>
            <person name="Jagels K."/>
            <person name="Krogh A."/>
            <person name="McLean J."/>
            <person name="Moule S."/>
            <person name="Murphy L.D."/>
            <person name="Oliver S."/>
            <person name="Osborne J."/>
            <person name="Quail M.A."/>
            <person name="Rajandream M.A."/>
            <person name="Rogers J."/>
            <person name="Rutter S."/>
            <person name="Seeger K."/>
            <person name="Skelton S."/>
            <person name="Squares S."/>
            <person name="Squares R."/>
            <person name="Sulston J.E."/>
            <person name="Taylor K."/>
            <person name="Whitehead S."/>
            <person name="Barrell B.G."/>
        </authorList>
    </citation>
    <scope>NUCLEOTIDE SEQUENCE [LARGE SCALE GENOMIC DNA]</scope>
    <source>
        <strain>ATCC 25618 / H37Rv</strain>
    </source>
</reference>
<reference key="2">
    <citation type="journal article" date="2011" name="Mol. Cell. Proteomics">
        <title>Proteogenomic analysis of Mycobacterium tuberculosis by high resolution mass spectrometry.</title>
        <authorList>
            <person name="Kelkar D.S."/>
            <person name="Kumar D."/>
            <person name="Kumar P."/>
            <person name="Balakrishnan L."/>
            <person name="Muthusamy B."/>
            <person name="Yadav A.K."/>
            <person name="Shrivastava P."/>
            <person name="Marimuthu A."/>
            <person name="Anand S."/>
            <person name="Sundaram H."/>
            <person name="Kingsbury R."/>
            <person name="Harsha H.C."/>
            <person name="Nair B."/>
            <person name="Prasad T.S."/>
            <person name="Chauhan D.S."/>
            <person name="Katoch K."/>
            <person name="Katoch V.M."/>
            <person name="Kumar P."/>
            <person name="Chaerkady R."/>
            <person name="Ramachandran S."/>
            <person name="Dash D."/>
            <person name="Pandey A."/>
        </authorList>
    </citation>
    <scope>IDENTIFICATION BY MASS SPECTROMETRY [LARGE SCALE ANALYSIS]</scope>
    <source>
        <strain>ATCC 25618 / H37Rv</strain>
    </source>
</reference>
<keyword id="KW-0004">4Fe-4S</keyword>
<keyword id="KW-0315">Glutamine amidotransferase</keyword>
<keyword id="KW-0328">Glycosyltransferase</keyword>
<keyword id="KW-0408">Iron</keyword>
<keyword id="KW-0411">Iron-sulfur</keyword>
<keyword id="KW-0460">Magnesium</keyword>
<keyword id="KW-0479">Metal-binding</keyword>
<keyword id="KW-0658">Purine biosynthesis</keyword>
<keyword id="KW-1185">Reference proteome</keyword>
<keyword id="KW-0808">Transferase</keyword>
<evidence type="ECO:0000250" key="1"/>
<evidence type="ECO:0000255" key="2">
    <source>
        <dbReference type="HAMAP-Rule" id="MF_01931"/>
    </source>
</evidence>
<evidence type="ECO:0000256" key="3">
    <source>
        <dbReference type="SAM" id="MobiDB-lite"/>
    </source>
</evidence>
<comment type="function">
    <text evidence="2">Catalyzes the formation of phosphoribosylamine from phosphoribosylpyrophosphate (PRPP) and glutamine.</text>
</comment>
<comment type="catalytic activity">
    <reaction evidence="2">
        <text>5-phospho-beta-D-ribosylamine + L-glutamate + diphosphate = 5-phospho-alpha-D-ribose 1-diphosphate + L-glutamine + H2O</text>
        <dbReference type="Rhea" id="RHEA:14905"/>
        <dbReference type="ChEBI" id="CHEBI:15377"/>
        <dbReference type="ChEBI" id="CHEBI:29985"/>
        <dbReference type="ChEBI" id="CHEBI:33019"/>
        <dbReference type="ChEBI" id="CHEBI:58017"/>
        <dbReference type="ChEBI" id="CHEBI:58359"/>
        <dbReference type="ChEBI" id="CHEBI:58681"/>
        <dbReference type="EC" id="2.4.2.14"/>
    </reaction>
</comment>
<comment type="cofactor">
    <cofactor evidence="2">
        <name>Mg(2+)</name>
        <dbReference type="ChEBI" id="CHEBI:18420"/>
    </cofactor>
    <text evidence="2">Binds 1 Mg(2+) ion per subunit.</text>
</comment>
<comment type="cofactor">
    <cofactor evidence="2">
        <name>[4Fe-4S] cluster</name>
        <dbReference type="ChEBI" id="CHEBI:49883"/>
    </cofactor>
    <text evidence="2">Binds 1 [4Fe-4S] cluster per subunit.</text>
</comment>
<comment type="pathway">
    <text evidence="2">Purine metabolism; IMP biosynthesis via de novo pathway; N(1)-(5-phospho-D-ribosyl)glycinamide from 5-phospho-alpha-D-ribose 1-diphosphate: step 1/2.</text>
</comment>
<comment type="similarity">
    <text evidence="2">In the C-terminal section; belongs to the purine/pyrimidine phosphoribosyltransferase family.</text>
</comment>
<proteinExistence type="evidence at protein level"/>
<gene>
    <name evidence="2" type="primary">purF</name>
    <name type="ordered locus">Rv0808</name>
    <name type="ORF">MTCY07H7A.01c</name>
</gene>